<accession>Q0BCG4</accession>
<gene>
    <name type="ordered locus">Bamb_2603</name>
</gene>
<feature type="chain" id="PRO_1000051717" description="Nucleotide-binding protein Bamb_2603">
    <location>
        <begin position="1"/>
        <end position="161"/>
    </location>
</feature>
<protein>
    <recommendedName>
        <fullName evidence="1">Nucleotide-binding protein Bamb_2603</fullName>
    </recommendedName>
</protein>
<name>Y2603_BURCM</name>
<dbReference type="EMBL" id="CP000440">
    <property type="protein sequence ID" value="ABI88159.1"/>
    <property type="molecule type" value="Genomic_DNA"/>
</dbReference>
<dbReference type="RefSeq" id="WP_011657749.1">
    <property type="nucleotide sequence ID" value="NC_008390.1"/>
</dbReference>
<dbReference type="SMR" id="Q0BCG4"/>
<dbReference type="GeneID" id="93085194"/>
<dbReference type="KEGG" id="bam:Bamb_2603"/>
<dbReference type="PATRIC" id="fig|339670.21.peg.2298"/>
<dbReference type="eggNOG" id="COG1666">
    <property type="taxonomic scope" value="Bacteria"/>
</dbReference>
<dbReference type="Proteomes" id="UP000000662">
    <property type="component" value="Chromosome 1"/>
</dbReference>
<dbReference type="GO" id="GO:0005829">
    <property type="term" value="C:cytosol"/>
    <property type="evidence" value="ECO:0007669"/>
    <property type="project" value="TreeGrafter"/>
</dbReference>
<dbReference type="GO" id="GO:0000166">
    <property type="term" value="F:nucleotide binding"/>
    <property type="evidence" value="ECO:0007669"/>
    <property type="project" value="TreeGrafter"/>
</dbReference>
<dbReference type="CDD" id="cd11740">
    <property type="entry name" value="YajQ_like"/>
    <property type="match status" value="1"/>
</dbReference>
<dbReference type="Gene3D" id="3.30.70.990">
    <property type="entry name" value="YajQ-like, domain 2"/>
    <property type="match status" value="1"/>
</dbReference>
<dbReference type="HAMAP" id="MF_00632">
    <property type="entry name" value="YajQ"/>
    <property type="match status" value="1"/>
</dbReference>
<dbReference type="InterPro" id="IPR007551">
    <property type="entry name" value="DUF520"/>
</dbReference>
<dbReference type="InterPro" id="IPR035570">
    <property type="entry name" value="UPF0234_N"/>
</dbReference>
<dbReference type="InterPro" id="IPR036183">
    <property type="entry name" value="YajQ-like_sf"/>
</dbReference>
<dbReference type="NCBIfam" id="NF003819">
    <property type="entry name" value="PRK05412.1"/>
    <property type="match status" value="1"/>
</dbReference>
<dbReference type="PANTHER" id="PTHR30476">
    <property type="entry name" value="UPF0234 PROTEIN YAJQ"/>
    <property type="match status" value="1"/>
</dbReference>
<dbReference type="PANTHER" id="PTHR30476:SF0">
    <property type="entry name" value="UPF0234 PROTEIN YAJQ"/>
    <property type="match status" value="1"/>
</dbReference>
<dbReference type="Pfam" id="PF04461">
    <property type="entry name" value="DUF520"/>
    <property type="match status" value="1"/>
</dbReference>
<dbReference type="SUPFAM" id="SSF89963">
    <property type="entry name" value="YajQ-like"/>
    <property type="match status" value="2"/>
</dbReference>
<comment type="function">
    <text evidence="1">Nucleotide-binding protein.</text>
</comment>
<comment type="similarity">
    <text evidence="1">Belongs to the YajQ family.</text>
</comment>
<organism>
    <name type="scientific">Burkholderia ambifaria (strain ATCC BAA-244 / DSM 16087 / CCUG 44356 / LMG 19182 / AMMD)</name>
    <name type="common">Burkholderia cepacia (strain AMMD)</name>
    <dbReference type="NCBI Taxonomy" id="339670"/>
    <lineage>
        <taxon>Bacteria</taxon>
        <taxon>Pseudomonadati</taxon>
        <taxon>Pseudomonadota</taxon>
        <taxon>Betaproteobacteria</taxon>
        <taxon>Burkholderiales</taxon>
        <taxon>Burkholderiaceae</taxon>
        <taxon>Burkholderia</taxon>
        <taxon>Burkholderia cepacia complex</taxon>
    </lineage>
</organism>
<evidence type="ECO:0000255" key="1">
    <source>
        <dbReference type="HAMAP-Rule" id="MF_00632"/>
    </source>
</evidence>
<reference key="1">
    <citation type="submission" date="2006-08" db="EMBL/GenBank/DDBJ databases">
        <title>Complete sequence of chromosome 1 of Burkholderia cepacia AMMD.</title>
        <authorList>
            <person name="Copeland A."/>
            <person name="Lucas S."/>
            <person name="Lapidus A."/>
            <person name="Barry K."/>
            <person name="Detter J.C."/>
            <person name="Glavina del Rio T."/>
            <person name="Hammon N."/>
            <person name="Israni S."/>
            <person name="Pitluck S."/>
            <person name="Bruce D."/>
            <person name="Chain P."/>
            <person name="Malfatti S."/>
            <person name="Shin M."/>
            <person name="Vergez L."/>
            <person name="Schmutz J."/>
            <person name="Larimer F."/>
            <person name="Land M."/>
            <person name="Hauser L."/>
            <person name="Kyrpides N."/>
            <person name="Kim E."/>
            <person name="Parke J."/>
            <person name="Coenye T."/>
            <person name="Konstantinidis K."/>
            <person name="Ramette A."/>
            <person name="Tiedje J."/>
            <person name="Richardson P."/>
        </authorList>
    </citation>
    <scope>NUCLEOTIDE SEQUENCE [LARGE SCALE GENOMIC DNA]</scope>
    <source>
        <strain>ATCC BAA-244 / DSM 16087 / CCUG 44356 / LMG 19182 / AMMD</strain>
    </source>
</reference>
<sequence>MPSFDVVSEANMIEVKNAIEQSNKEISTRFDFKGSDARVEQKERELTLFADDDFKLGQVKDVLINKLAKRNVDVRFLDYGKVEKIGGDKVKQIVTVKKGVTGDLAKKIVRLVKDSKIKVQASIQGDAVRVTGTKRDDLQSVIAMLRKEVTDTPLDFNNFRD</sequence>
<proteinExistence type="inferred from homology"/>
<keyword id="KW-0547">Nucleotide-binding</keyword>